<accession>B8J731</accession>
<evidence type="ECO:0000255" key="1">
    <source>
        <dbReference type="HAMAP-Rule" id="MF_00042"/>
    </source>
</evidence>
<evidence type="ECO:0000255" key="2">
    <source>
        <dbReference type="PROSITE-ProRule" id="PRU00408"/>
    </source>
</evidence>
<sequence length="183" mass="19433">MSQARFIAFSDGSALVNPGGPGGTGFVVLDRARPAYRFGGTRWVEDGPNAVTNNRMELRAVLEALEGLPGGEQVEVISDSRYVVDALSRWIHGWRKKGWRTASGEPVLNRDLIEALDARASALTVRYTWVRGHDGHAVNEVVDQLAQAAARGVAGPGEAEVVAALRAEAFLAGGSAAPRSSRA</sequence>
<comment type="function">
    <text evidence="1">Endonuclease that specifically degrades the RNA of RNA-DNA hybrids.</text>
</comment>
<comment type="catalytic activity">
    <reaction evidence="1">
        <text>Endonucleolytic cleavage to 5'-phosphomonoester.</text>
        <dbReference type="EC" id="3.1.26.4"/>
    </reaction>
</comment>
<comment type="cofactor">
    <cofactor evidence="1">
        <name>Mg(2+)</name>
        <dbReference type="ChEBI" id="CHEBI:18420"/>
    </cofactor>
    <text evidence="1">Binds 1 Mg(2+) ion per subunit. May bind a second metal ion at a regulatory site, or after substrate binding.</text>
</comment>
<comment type="subunit">
    <text evidence="1">Monomer.</text>
</comment>
<comment type="subcellular location">
    <subcellularLocation>
        <location evidence="1">Cytoplasm</location>
    </subcellularLocation>
</comment>
<comment type="similarity">
    <text evidence="1">Belongs to the RNase H family.</text>
</comment>
<feature type="chain" id="PRO_1000117315" description="Ribonuclease H">
    <location>
        <begin position="1"/>
        <end position="183"/>
    </location>
</feature>
<feature type="domain" description="RNase H type-1" evidence="2">
    <location>
        <begin position="2"/>
        <end position="151"/>
    </location>
</feature>
<feature type="binding site" evidence="1">
    <location>
        <position position="11"/>
    </location>
    <ligand>
        <name>Mg(2+)</name>
        <dbReference type="ChEBI" id="CHEBI:18420"/>
        <label>1</label>
    </ligand>
</feature>
<feature type="binding site" evidence="1">
    <location>
        <position position="11"/>
    </location>
    <ligand>
        <name>Mg(2+)</name>
        <dbReference type="ChEBI" id="CHEBI:18420"/>
        <label>2</label>
    </ligand>
</feature>
<feature type="binding site" evidence="1">
    <location>
        <position position="57"/>
    </location>
    <ligand>
        <name>Mg(2+)</name>
        <dbReference type="ChEBI" id="CHEBI:18420"/>
        <label>1</label>
    </ligand>
</feature>
<feature type="binding site" evidence="1">
    <location>
        <position position="79"/>
    </location>
    <ligand>
        <name>Mg(2+)</name>
        <dbReference type="ChEBI" id="CHEBI:18420"/>
        <label>1</label>
    </ligand>
</feature>
<feature type="binding site" evidence="1">
    <location>
        <position position="143"/>
    </location>
    <ligand>
        <name>Mg(2+)</name>
        <dbReference type="ChEBI" id="CHEBI:18420"/>
        <label>2</label>
    </ligand>
</feature>
<keyword id="KW-0963">Cytoplasm</keyword>
<keyword id="KW-0255">Endonuclease</keyword>
<keyword id="KW-0378">Hydrolase</keyword>
<keyword id="KW-0460">Magnesium</keyword>
<keyword id="KW-0479">Metal-binding</keyword>
<keyword id="KW-0540">Nuclease</keyword>
<name>RNH_ANAD2</name>
<organism>
    <name type="scientific">Anaeromyxobacter dehalogenans (strain 2CP-1 / ATCC BAA-258)</name>
    <dbReference type="NCBI Taxonomy" id="455488"/>
    <lineage>
        <taxon>Bacteria</taxon>
        <taxon>Pseudomonadati</taxon>
        <taxon>Myxococcota</taxon>
        <taxon>Myxococcia</taxon>
        <taxon>Myxococcales</taxon>
        <taxon>Cystobacterineae</taxon>
        <taxon>Anaeromyxobacteraceae</taxon>
        <taxon>Anaeromyxobacter</taxon>
    </lineage>
</organism>
<gene>
    <name evidence="1" type="primary">rnhA</name>
    <name type="ordered locus">A2cp1_1879</name>
</gene>
<proteinExistence type="inferred from homology"/>
<reference key="1">
    <citation type="submission" date="2009-01" db="EMBL/GenBank/DDBJ databases">
        <title>Complete sequence of Anaeromyxobacter dehalogenans 2CP-1.</title>
        <authorList>
            <person name="Lucas S."/>
            <person name="Copeland A."/>
            <person name="Lapidus A."/>
            <person name="Glavina del Rio T."/>
            <person name="Dalin E."/>
            <person name="Tice H."/>
            <person name="Bruce D."/>
            <person name="Goodwin L."/>
            <person name="Pitluck S."/>
            <person name="Saunders E."/>
            <person name="Brettin T."/>
            <person name="Detter J.C."/>
            <person name="Han C."/>
            <person name="Larimer F."/>
            <person name="Land M."/>
            <person name="Hauser L."/>
            <person name="Kyrpides N."/>
            <person name="Ovchinnikova G."/>
            <person name="Beliaev A.S."/>
            <person name="Richardson P."/>
        </authorList>
    </citation>
    <scope>NUCLEOTIDE SEQUENCE [LARGE SCALE GENOMIC DNA]</scope>
    <source>
        <strain>2CP-1 / ATCC BAA-258</strain>
    </source>
</reference>
<dbReference type="EC" id="3.1.26.4" evidence="1"/>
<dbReference type="EMBL" id="CP001359">
    <property type="protein sequence ID" value="ACL65221.1"/>
    <property type="molecule type" value="Genomic_DNA"/>
</dbReference>
<dbReference type="RefSeq" id="WP_012633139.1">
    <property type="nucleotide sequence ID" value="NC_011891.1"/>
</dbReference>
<dbReference type="SMR" id="B8J731"/>
<dbReference type="KEGG" id="acp:A2cp1_1879"/>
<dbReference type="HOGENOM" id="CLU_030894_6_1_7"/>
<dbReference type="Proteomes" id="UP000007089">
    <property type="component" value="Chromosome"/>
</dbReference>
<dbReference type="GO" id="GO:0005737">
    <property type="term" value="C:cytoplasm"/>
    <property type="evidence" value="ECO:0007669"/>
    <property type="project" value="UniProtKB-SubCell"/>
</dbReference>
<dbReference type="GO" id="GO:0000287">
    <property type="term" value="F:magnesium ion binding"/>
    <property type="evidence" value="ECO:0007669"/>
    <property type="project" value="UniProtKB-UniRule"/>
</dbReference>
<dbReference type="GO" id="GO:0003676">
    <property type="term" value="F:nucleic acid binding"/>
    <property type="evidence" value="ECO:0007669"/>
    <property type="project" value="InterPro"/>
</dbReference>
<dbReference type="GO" id="GO:0004523">
    <property type="term" value="F:RNA-DNA hybrid ribonuclease activity"/>
    <property type="evidence" value="ECO:0007669"/>
    <property type="project" value="UniProtKB-UniRule"/>
</dbReference>
<dbReference type="GO" id="GO:0043137">
    <property type="term" value="P:DNA replication, removal of RNA primer"/>
    <property type="evidence" value="ECO:0007669"/>
    <property type="project" value="TreeGrafter"/>
</dbReference>
<dbReference type="CDD" id="cd09278">
    <property type="entry name" value="RNase_HI_prokaryote_like"/>
    <property type="match status" value="1"/>
</dbReference>
<dbReference type="Gene3D" id="3.30.420.10">
    <property type="entry name" value="Ribonuclease H-like superfamily/Ribonuclease H"/>
    <property type="match status" value="1"/>
</dbReference>
<dbReference type="HAMAP" id="MF_00042">
    <property type="entry name" value="RNase_H"/>
    <property type="match status" value="1"/>
</dbReference>
<dbReference type="InterPro" id="IPR050092">
    <property type="entry name" value="RNase_H"/>
</dbReference>
<dbReference type="InterPro" id="IPR012337">
    <property type="entry name" value="RNaseH-like_sf"/>
</dbReference>
<dbReference type="InterPro" id="IPR002156">
    <property type="entry name" value="RNaseH_domain"/>
</dbReference>
<dbReference type="InterPro" id="IPR036397">
    <property type="entry name" value="RNaseH_sf"/>
</dbReference>
<dbReference type="InterPro" id="IPR022892">
    <property type="entry name" value="RNaseHI"/>
</dbReference>
<dbReference type="PANTHER" id="PTHR10642">
    <property type="entry name" value="RIBONUCLEASE H1"/>
    <property type="match status" value="1"/>
</dbReference>
<dbReference type="PANTHER" id="PTHR10642:SF26">
    <property type="entry name" value="RIBONUCLEASE H1"/>
    <property type="match status" value="1"/>
</dbReference>
<dbReference type="Pfam" id="PF00075">
    <property type="entry name" value="RNase_H"/>
    <property type="match status" value="1"/>
</dbReference>
<dbReference type="SUPFAM" id="SSF53098">
    <property type="entry name" value="Ribonuclease H-like"/>
    <property type="match status" value="1"/>
</dbReference>
<dbReference type="PROSITE" id="PS50879">
    <property type="entry name" value="RNASE_H_1"/>
    <property type="match status" value="1"/>
</dbReference>
<protein>
    <recommendedName>
        <fullName evidence="1">Ribonuclease H</fullName>
        <shortName evidence="1">RNase H</shortName>
        <ecNumber evidence="1">3.1.26.4</ecNumber>
    </recommendedName>
</protein>